<reference key="1">
    <citation type="journal article" date="2009" name="BMC Genomics">
        <title>Evidence for niche adaptation in the genome of the bovine pathogen Streptococcus uberis.</title>
        <authorList>
            <person name="Ward P.N."/>
            <person name="Holden M.T.G."/>
            <person name="Leigh J.A."/>
            <person name="Lennard N."/>
            <person name="Bignell A."/>
            <person name="Barron A."/>
            <person name="Clark L."/>
            <person name="Quail M.A."/>
            <person name="Woodward J."/>
            <person name="Barrell B.G."/>
            <person name="Egan S.A."/>
            <person name="Field T.R."/>
            <person name="Maskell D."/>
            <person name="Kehoe M."/>
            <person name="Dowson C.G."/>
            <person name="Chanter N."/>
            <person name="Whatmore A.M."/>
            <person name="Bentley S.D."/>
            <person name="Parkhill J."/>
        </authorList>
    </citation>
    <scope>NUCLEOTIDE SEQUENCE [LARGE SCALE GENOMIC DNA]</scope>
    <source>
        <strain>ATCC BAA-854 / 0140J</strain>
    </source>
</reference>
<sequence length="77" mass="8269">MANIKSAIKRAELNVKANEKNSAQKSAMRTAIKAFEANPTEELFRAASSSIDKAESKGLIHANKASRDKARLAAKLG</sequence>
<gene>
    <name evidence="1" type="primary">rpsT</name>
    <name type="ordered locus">SUB0956</name>
</gene>
<evidence type="ECO:0000255" key="1">
    <source>
        <dbReference type="HAMAP-Rule" id="MF_00500"/>
    </source>
</evidence>
<evidence type="ECO:0000305" key="2"/>
<dbReference type="EMBL" id="AM946015">
    <property type="protein sequence ID" value="CAR42128.1"/>
    <property type="molecule type" value="Genomic_DNA"/>
</dbReference>
<dbReference type="SMR" id="B9DS97"/>
<dbReference type="STRING" id="218495.SUB0956"/>
<dbReference type="KEGG" id="sub:SUB0956"/>
<dbReference type="eggNOG" id="COG0268">
    <property type="taxonomic scope" value="Bacteria"/>
</dbReference>
<dbReference type="HOGENOM" id="CLU_160655_1_1_9"/>
<dbReference type="OrthoDB" id="9808392at2"/>
<dbReference type="Proteomes" id="UP000000449">
    <property type="component" value="Chromosome"/>
</dbReference>
<dbReference type="GO" id="GO:0005829">
    <property type="term" value="C:cytosol"/>
    <property type="evidence" value="ECO:0007669"/>
    <property type="project" value="TreeGrafter"/>
</dbReference>
<dbReference type="GO" id="GO:0015935">
    <property type="term" value="C:small ribosomal subunit"/>
    <property type="evidence" value="ECO:0007669"/>
    <property type="project" value="TreeGrafter"/>
</dbReference>
<dbReference type="GO" id="GO:0070181">
    <property type="term" value="F:small ribosomal subunit rRNA binding"/>
    <property type="evidence" value="ECO:0007669"/>
    <property type="project" value="TreeGrafter"/>
</dbReference>
<dbReference type="GO" id="GO:0003735">
    <property type="term" value="F:structural constituent of ribosome"/>
    <property type="evidence" value="ECO:0007669"/>
    <property type="project" value="InterPro"/>
</dbReference>
<dbReference type="GO" id="GO:0006412">
    <property type="term" value="P:translation"/>
    <property type="evidence" value="ECO:0007669"/>
    <property type="project" value="UniProtKB-UniRule"/>
</dbReference>
<dbReference type="FunFam" id="1.20.58.110:FF:000001">
    <property type="entry name" value="30S ribosomal protein S20"/>
    <property type="match status" value="1"/>
</dbReference>
<dbReference type="Gene3D" id="1.20.58.110">
    <property type="entry name" value="Ribosomal protein S20"/>
    <property type="match status" value="1"/>
</dbReference>
<dbReference type="HAMAP" id="MF_00500">
    <property type="entry name" value="Ribosomal_bS20"/>
    <property type="match status" value="1"/>
</dbReference>
<dbReference type="InterPro" id="IPR002583">
    <property type="entry name" value="Ribosomal_bS20"/>
</dbReference>
<dbReference type="InterPro" id="IPR036510">
    <property type="entry name" value="Ribosomal_bS20_sf"/>
</dbReference>
<dbReference type="NCBIfam" id="TIGR00029">
    <property type="entry name" value="S20"/>
    <property type="match status" value="1"/>
</dbReference>
<dbReference type="PANTHER" id="PTHR33398">
    <property type="entry name" value="30S RIBOSOMAL PROTEIN S20"/>
    <property type="match status" value="1"/>
</dbReference>
<dbReference type="PANTHER" id="PTHR33398:SF1">
    <property type="entry name" value="SMALL RIBOSOMAL SUBUNIT PROTEIN BS20C"/>
    <property type="match status" value="1"/>
</dbReference>
<dbReference type="Pfam" id="PF01649">
    <property type="entry name" value="Ribosomal_S20p"/>
    <property type="match status" value="1"/>
</dbReference>
<dbReference type="SUPFAM" id="SSF46992">
    <property type="entry name" value="Ribosomal protein S20"/>
    <property type="match status" value="1"/>
</dbReference>
<accession>B9DS97</accession>
<feature type="chain" id="PRO_1000194270" description="Small ribosomal subunit protein bS20">
    <location>
        <begin position="1"/>
        <end position="77"/>
    </location>
</feature>
<keyword id="KW-1185">Reference proteome</keyword>
<keyword id="KW-0687">Ribonucleoprotein</keyword>
<keyword id="KW-0689">Ribosomal protein</keyword>
<keyword id="KW-0694">RNA-binding</keyword>
<keyword id="KW-0699">rRNA-binding</keyword>
<protein>
    <recommendedName>
        <fullName evidence="1">Small ribosomal subunit protein bS20</fullName>
    </recommendedName>
    <alternativeName>
        <fullName evidence="2">30S ribosomal protein S20</fullName>
    </alternativeName>
</protein>
<organism>
    <name type="scientific">Streptococcus uberis (strain ATCC BAA-854 / 0140J)</name>
    <dbReference type="NCBI Taxonomy" id="218495"/>
    <lineage>
        <taxon>Bacteria</taxon>
        <taxon>Bacillati</taxon>
        <taxon>Bacillota</taxon>
        <taxon>Bacilli</taxon>
        <taxon>Lactobacillales</taxon>
        <taxon>Streptococcaceae</taxon>
        <taxon>Streptococcus</taxon>
    </lineage>
</organism>
<proteinExistence type="inferred from homology"/>
<comment type="function">
    <text evidence="1">Binds directly to 16S ribosomal RNA.</text>
</comment>
<comment type="similarity">
    <text evidence="1">Belongs to the bacterial ribosomal protein bS20 family.</text>
</comment>
<name>RS20_STRU0</name>